<reference key="1">
    <citation type="journal article" date="2009" name="J. Bacteriol.">
        <title>Genome sequence of Azotobacter vinelandii, an obligate aerobe specialized to support diverse anaerobic metabolic processes.</title>
        <authorList>
            <person name="Setubal J.C."/>
            <person name="Dos Santos P."/>
            <person name="Goldman B.S."/>
            <person name="Ertesvaag H."/>
            <person name="Espin G."/>
            <person name="Rubio L.M."/>
            <person name="Valla S."/>
            <person name="Almeida N.F."/>
            <person name="Balasubramanian D."/>
            <person name="Cromes L."/>
            <person name="Curatti L."/>
            <person name="Du Z."/>
            <person name="Godsy E."/>
            <person name="Goodner B."/>
            <person name="Hellner-Burris K."/>
            <person name="Hernandez J.A."/>
            <person name="Houmiel K."/>
            <person name="Imperial J."/>
            <person name="Kennedy C."/>
            <person name="Larson T.J."/>
            <person name="Latreille P."/>
            <person name="Ligon L.S."/>
            <person name="Lu J."/>
            <person name="Maerk M."/>
            <person name="Miller N.M."/>
            <person name="Norton S."/>
            <person name="O'Carroll I.P."/>
            <person name="Paulsen I."/>
            <person name="Raulfs E.C."/>
            <person name="Roemer R."/>
            <person name="Rosser J."/>
            <person name="Segura D."/>
            <person name="Slater S."/>
            <person name="Stricklin S.L."/>
            <person name="Studholme D.J."/>
            <person name="Sun J."/>
            <person name="Viana C.J."/>
            <person name="Wallin E."/>
            <person name="Wang B."/>
            <person name="Wheeler C."/>
            <person name="Zhu H."/>
            <person name="Dean D.R."/>
            <person name="Dixon R."/>
            <person name="Wood D."/>
        </authorList>
    </citation>
    <scope>NUCLEOTIDE SEQUENCE [LARGE SCALE GENOMIC DNA]</scope>
    <source>
        <strain>DJ / ATCC BAA-1303</strain>
    </source>
</reference>
<dbReference type="EC" id="6.1.1.10" evidence="1"/>
<dbReference type="EMBL" id="CP001157">
    <property type="protein sequence ID" value="ACO78139.1"/>
    <property type="molecule type" value="Genomic_DNA"/>
</dbReference>
<dbReference type="RefSeq" id="WP_012700548.1">
    <property type="nucleotide sequence ID" value="NC_012560.1"/>
</dbReference>
<dbReference type="SMR" id="C1DEF4"/>
<dbReference type="STRING" id="322710.Avin_19280"/>
<dbReference type="EnsemblBacteria" id="ACO78139">
    <property type="protein sequence ID" value="ACO78139"/>
    <property type="gene ID" value="Avin_19280"/>
</dbReference>
<dbReference type="GeneID" id="88185170"/>
<dbReference type="KEGG" id="avn:Avin_19280"/>
<dbReference type="eggNOG" id="COG0073">
    <property type="taxonomic scope" value="Bacteria"/>
</dbReference>
<dbReference type="eggNOG" id="COG0143">
    <property type="taxonomic scope" value="Bacteria"/>
</dbReference>
<dbReference type="HOGENOM" id="CLU_009710_7_0_6"/>
<dbReference type="OrthoDB" id="9810191at2"/>
<dbReference type="Proteomes" id="UP000002424">
    <property type="component" value="Chromosome"/>
</dbReference>
<dbReference type="GO" id="GO:0005829">
    <property type="term" value="C:cytosol"/>
    <property type="evidence" value="ECO:0007669"/>
    <property type="project" value="TreeGrafter"/>
</dbReference>
<dbReference type="GO" id="GO:0005524">
    <property type="term" value="F:ATP binding"/>
    <property type="evidence" value="ECO:0007669"/>
    <property type="project" value="UniProtKB-UniRule"/>
</dbReference>
<dbReference type="GO" id="GO:0046872">
    <property type="term" value="F:metal ion binding"/>
    <property type="evidence" value="ECO:0007669"/>
    <property type="project" value="UniProtKB-KW"/>
</dbReference>
<dbReference type="GO" id="GO:0004825">
    <property type="term" value="F:methionine-tRNA ligase activity"/>
    <property type="evidence" value="ECO:0007669"/>
    <property type="project" value="UniProtKB-UniRule"/>
</dbReference>
<dbReference type="GO" id="GO:0000049">
    <property type="term" value="F:tRNA binding"/>
    <property type="evidence" value="ECO:0007669"/>
    <property type="project" value="UniProtKB-KW"/>
</dbReference>
<dbReference type="GO" id="GO:0006431">
    <property type="term" value="P:methionyl-tRNA aminoacylation"/>
    <property type="evidence" value="ECO:0007669"/>
    <property type="project" value="UniProtKB-UniRule"/>
</dbReference>
<dbReference type="CDD" id="cd07957">
    <property type="entry name" value="Anticodon_Ia_Met"/>
    <property type="match status" value="1"/>
</dbReference>
<dbReference type="CDD" id="cd00814">
    <property type="entry name" value="MetRS_core"/>
    <property type="match status" value="1"/>
</dbReference>
<dbReference type="CDD" id="cd02800">
    <property type="entry name" value="tRNA_bind_EcMetRS_like"/>
    <property type="match status" value="1"/>
</dbReference>
<dbReference type="FunFam" id="1.10.730.10:FF:000005">
    <property type="entry name" value="Methionine--tRNA ligase"/>
    <property type="match status" value="1"/>
</dbReference>
<dbReference type="FunFam" id="2.20.28.20:FF:000001">
    <property type="entry name" value="Methionine--tRNA ligase"/>
    <property type="match status" value="1"/>
</dbReference>
<dbReference type="FunFam" id="2.40.50.140:FF:000042">
    <property type="entry name" value="Methionine--tRNA ligase"/>
    <property type="match status" value="1"/>
</dbReference>
<dbReference type="Gene3D" id="3.40.50.620">
    <property type="entry name" value="HUPs"/>
    <property type="match status" value="1"/>
</dbReference>
<dbReference type="Gene3D" id="1.10.730.10">
    <property type="entry name" value="Isoleucyl-tRNA Synthetase, Domain 1"/>
    <property type="match status" value="1"/>
</dbReference>
<dbReference type="Gene3D" id="2.20.28.20">
    <property type="entry name" value="Methionyl-tRNA synthetase, Zn-domain"/>
    <property type="match status" value="1"/>
</dbReference>
<dbReference type="Gene3D" id="2.40.50.140">
    <property type="entry name" value="Nucleic acid-binding proteins"/>
    <property type="match status" value="1"/>
</dbReference>
<dbReference type="HAMAP" id="MF_00098">
    <property type="entry name" value="Met_tRNA_synth_type1"/>
    <property type="match status" value="1"/>
</dbReference>
<dbReference type="InterPro" id="IPR001412">
    <property type="entry name" value="aa-tRNA-synth_I_CS"/>
</dbReference>
<dbReference type="InterPro" id="IPR041872">
    <property type="entry name" value="Anticodon_Met"/>
</dbReference>
<dbReference type="InterPro" id="IPR004495">
    <property type="entry name" value="Met-tRNA-synth_bsu_C"/>
</dbReference>
<dbReference type="InterPro" id="IPR023458">
    <property type="entry name" value="Met-tRNA_ligase_1"/>
</dbReference>
<dbReference type="InterPro" id="IPR014758">
    <property type="entry name" value="Met-tRNA_synth"/>
</dbReference>
<dbReference type="InterPro" id="IPR015413">
    <property type="entry name" value="Methionyl/Leucyl_tRNA_Synth"/>
</dbReference>
<dbReference type="InterPro" id="IPR033911">
    <property type="entry name" value="MetRS_core"/>
</dbReference>
<dbReference type="InterPro" id="IPR029038">
    <property type="entry name" value="MetRS_Zn"/>
</dbReference>
<dbReference type="InterPro" id="IPR012340">
    <property type="entry name" value="NA-bd_OB-fold"/>
</dbReference>
<dbReference type="InterPro" id="IPR014729">
    <property type="entry name" value="Rossmann-like_a/b/a_fold"/>
</dbReference>
<dbReference type="InterPro" id="IPR002547">
    <property type="entry name" value="tRNA-bd_dom"/>
</dbReference>
<dbReference type="InterPro" id="IPR009080">
    <property type="entry name" value="tRNAsynth_Ia_anticodon-bd"/>
</dbReference>
<dbReference type="NCBIfam" id="TIGR00398">
    <property type="entry name" value="metG"/>
    <property type="match status" value="1"/>
</dbReference>
<dbReference type="NCBIfam" id="TIGR00399">
    <property type="entry name" value="metG_C_term"/>
    <property type="match status" value="1"/>
</dbReference>
<dbReference type="NCBIfam" id="NF001100">
    <property type="entry name" value="PRK00133.1"/>
    <property type="match status" value="1"/>
</dbReference>
<dbReference type="PANTHER" id="PTHR45765">
    <property type="entry name" value="METHIONINE--TRNA LIGASE"/>
    <property type="match status" value="1"/>
</dbReference>
<dbReference type="PANTHER" id="PTHR45765:SF1">
    <property type="entry name" value="METHIONINE--TRNA LIGASE, CYTOPLASMIC"/>
    <property type="match status" value="1"/>
</dbReference>
<dbReference type="Pfam" id="PF19303">
    <property type="entry name" value="Anticodon_3"/>
    <property type="match status" value="1"/>
</dbReference>
<dbReference type="Pfam" id="PF09334">
    <property type="entry name" value="tRNA-synt_1g"/>
    <property type="match status" value="1"/>
</dbReference>
<dbReference type="Pfam" id="PF01588">
    <property type="entry name" value="tRNA_bind"/>
    <property type="match status" value="1"/>
</dbReference>
<dbReference type="PRINTS" id="PR01041">
    <property type="entry name" value="TRNASYNTHMET"/>
</dbReference>
<dbReference type="SUPFAM" id="SSF47323">
    <property type="entry name" value="Anticodon-binding domain of a subclass of class I aminoacyl-tRNA synthetases"/>
    <property type="match status" value="1"/>
</dbReference>
<dbReference type="SUPFAM" id="SSF57770">
    <property type="entry name" value="Methionyl-tRNA synthetase (MetRS), Zn-domain"/>
    <property type="match status" value="1"/>
</dbReference>
<dbReference type="SUPFAM" id="SSF50249">
    <property type="entry name" value="Nucleic acid-binding proteins"/>
    <property type="match status" value="1"/>
</dbReference>
<dbReference type="SUPFAM" id="SSF52374">
    <property type="entry name" value="Nucleotidylyl transferase"/>
    <property type="match status" value="1"/>
</dbReference>
<dbReference type="PROSITE" id="PS00178">
    <property type="entry name" value="AA_TRNA_LIGASE_I"/>
    <property type="match status" value="1"/>
</dbReference>
<dbReference type="PROSITE" id="PS50886">
    <property type="entry name" value="TRBD"/>
    <property type="match status" value="1"/>
</dbReference>
<name>SYM_AZOVD</name>
<proteinExistence type="inferred from homology"/>
<sequence>MPEARQILVTSALPYANGSIHLGHMLEYIQTDIWVRFQKQRGNQCVYVCADDAHGSAIMLRAEKEGITPEQLIAYVQAEHSADFADFLVDFDNYHSTHAEENRALSEAIYLRLRDAGHIATRSVTQYFDPEKGMFLADRFIKGTCPKCGAEDQYGDNCEKCGATYEPTELKDPRSAISGATPVLKDSKHFFFKLPDFEAMLKEWTRSGTLQEAVANKIAEWLDGGLQEWDISRDAPYFGFEIPDEPGKYFYVWLDAPIGYMASFKNLCARRPELDFDAFWCKDSKAELYHFIGKDIVNFHTLFWPAMLEGAGFRKPTAVNVHGYLTVNGQKMSKSRGTFIKARTYLDHLNPEYLRYYYASKLSRGVDDLDLNLEDFVQKVNSDLVGKVVNIASRCAGFIHKGNAGLMVDANPEPELWEAFQVAAPAIAEAYEGRDFGRAMREIMALADRANAWIADKAPWALNKQEGKQTEVQEICAFGINLFRQLVIFLKPVLPNLATAAEAFLNVAPLTWQDHTLRLANHPLNPFTPLMTRIEPAKIDAMIEASKEDLAAQNSEAAAPQGNGELVKEPLAPEIDFNAFAAVDLRIALIEKAEFVEGADKLLRLTLDIGDAKRNVFSGIKSAYPEPSELEGRLTLYVANLAPRKMKFGLSEGMVLAAGPGGSEIFLLSPDAGAKPGQRVH</sequence>
<comment type="function">
    <text evidence="1">Is required not only for elongation of protein synthesis but also for the initiation of all mRNA translation through initiator tRNA(fMet) aminoacylation.</text>
</comment>
<comment type="catalytic activity">
    <reaction evidence="1">
        <text>tRNA(Met) + L-methionine + ATP = L-methionyl-tRNA(Met) + AMP + diphosphate</text>
        <dbReference type="Rhea" id="RHEA:13481"/>
        <dbReference type="Rhea" id="RHEA-COMP:9667"/>
        <dbReference type="Rhea" id="RHEA-COMP:9698"/>
        <dbReference type="ChEBI" id="CHEBI:30616"/>
        <dbReference type="ChEBI" id="CHEBI:33019"/>
        <dbReference type="ChEBI" id="CHEBI:57844"/>
        <dbReference type="ChEBI" id="CHEBI:78442"/>
        <dbReference type="ChEBI" id="CHEBI:78530"/>
        <dbReference type="ChEBI" id="CHEBI:456215"/>
        <dbReference type="EC" id="6.1.1.10"/>
    </reaction>
</comment>
<comment type="cofactor">
    <cofactor evidence="1">
        <name>Zn(2+)</name>
        <dbReference type="ChEBI" id="CHEBI:29105"/>
    </cofactor>
    <text evidence="1">Binds 1 zinc ion per subunit.</text>
</comment>
<comment type="subunit">
    <text evidence="1">Homodimer.</text>
</comment>
<comment type="subcellular location">
    <subcellularLocation>
        <location evidence="1">Cytoplasm</location>
    </subcellularLocation>
</comment>
<comment type="similarity">
    <text evidence="1">Belongs to the class-I aminoacyl-tRNA synthetase family. MetG type 1 subfamily.</text>
</comment>
<protein>
    <recommendedName>
        <fullName evidence="1">Methionine--tRNA ligase</fullName>
        <ecNumber evidence="1">6.1.1.10</ecNumber>
    </recommendedName>
    <alternativeName>
        <fullName evidence="1">Methionyl-tRNA synthetase</fullName>
        <shortName evidence="1">MetRS</shortName>
    </alternativeName>
</protein>
<feature type="chain" id="PRO_1000202753" description="Methionine--tRNA ligase">
    <location>
        <begin position="1"/>
        <end position="681"/>
    </location>
</feature>
<feature type="domain" description="tRNA-binding" evidence="1">
    <location>
        <begin position="579"/>
        <end position="681"/>
    </location>
</feature>
<feature type="short sequence motif" description="'HIGH' region">
    <location>
        <begin position="14"/>
        <end position="24"/>
    </location>
</feature>
<feature type="short sequence motif" description="'KMSKS' region">
    <location>
        <begin position="331"/>
        <end position="335"/>
    </location>
</feature>
<feature type="binding site" evidence="1">
    <location>
        <position position="145"/>
    </location>
    <ligand>
        <name>Zn(2+)</name>
        <dbReference type="ChEBI" id="CHEBI:29105"/>
    </ligand>
</feature>
<feature type="binding site" evidence="1">
    <location>
        <position position="148"/>
    </location>
    <ligand>
        <name>Zn(2+)</name>
        <dbReference type="ChEBI" id="CHEBI:29105"/>
    </ligand>
</feature>
<feature type="binding site" evidence="1">
    <location>
        <position position="158"/>
    </location>
    <ligand>
        <name>Zn(2+)</name>
        <dbReference type="ChEBI" id="CHEBI:29105"/>
    </ligand>
</feature>
<feature type="binding site" evidence="1">
    <location>
        <position position="161"/>
    </location>
    <ligand>
        <name>Zn(2+)</name>
        <dbReference type="ChEBI" id="CHEBI:29105"/>
    </ligand>
</feature>
<feature type="binding site" evidence="1">
    <location>
        <position position="334"/>
    </location>
    <ligand>
        <name>ATP</name>
        <dbReference type="ChEBI" id="CHEBI:30616"/>
    </ligand>
</feature>
<keyword id="KW-0030">Aminoacyl-tRNA synthetase</keyword>
<keyword id="KW-0067">ATP-binding</keyword>
<keyword id="KW-0963">Cytoplasm</keyword>
<keyword id="KW-0436">Ligase</keyword>
<keyword id="KW-0479">Metal-binding</keyword>
<keyword id="KW-0547">Nucleotide-binding</keyword>
<keyword id="KW-0648">Protein biosynthesis</keyword>
<keyword id="KW-0694">RNA-binding</keyword>
<keyword id="KW-0820">tRNA-binding</keyword>
<keyword id="KW-0862">Zinc</keyword>
<evidence type="ECO:0000255" key="1">
    <source>
        <dbReference type="HAMAP-Rule" id="MF_00098"/>
    </source>
</evidence>
<gene>
    <name evidence="1" type="primary">metG</name>
    <name type="ordered locus">Avin_19280</name>
</gene>
<organism>
    <name type="scientific">Azotobacter vinelandii (strain DJ / ATCC BAA-1303)</name>
    <dbReference type="NCBI Taxonomy" id="322710"/>
    <lineage>
        <taxon>Bacteria</taxon>
        <taxon>Pseudomonadati</taxon>
        <taxon>Pseudomonadota</taxon>
        <taxon>Gammaproteobacteria</taxon>
        <taxon>Pseudomonadales</taxon>
        <taxon>Pseudomonadaceae</taxon>
        <taxon>Azotobacter</taxon>
    </lineage>
</organism>
<accession>C1DEF4</accession>